<evidence type="ECO:0000255" key="1">
    <source>
        <dbReference type="HAMAP-Rule" id="MF_00158"/>
    </source>
</evidence>
<reference key="1">
    <citation type="submission" date="2008-04" db="EMBL/GenBank/DDBJ databases">
        <title>Complete sequence of chromosome of Exiguobacterium sibiricum 255-15.</title>
        <authorList>
            <consortium name="US DOE Joint Genome Institute"/>
            <person name="Copeland A."/>
            <person name="Lucas S."/>
            <person name="Lapidus A."/>
            <person name="Glavina del Rio T."/>
            <person name="Dalin E."/>
            <person name="Tice H."/>
            <person name="Bruce D."/>
            <person name="Goodwin L."/>
            <person name="Pitluck S."/>
            <person name="Kiss H."/>
            <person name="Chertkov O."/>
            <person name="Monk C."/>
            <person name="Brettin T."/>
            <person name="Detter J.C."/>
            <person name="Han C."/>
            <person name="Kuske C.R."/>
            <person name="Schmutz J."/>
            <person name="Larimer F."/>
            <person name="Land M."/>
            <person name="Hauser L."/>
            <person name="Kyrpides N."/>
            <person name="Mikhailova N."/>
            <person name="Vishnivetskaya T."/>
            <person name="Rodrigues D.F."/>
            <person name="Gilichinsky D."/>
            <person name="Tiedje J."/>
            <person name="Richardson P."/>
        </authorList>
    </citation>
    <scope>NUCLEOTIDE SEQUENCE [LARGE SCALE GENOMIC DNA]</scope>
    <source>
        <strain>DSM 17290 / CCUG 55495 / CIP 109462 / JCM 13490 / 255-15</strain>
    </source>
</reference>
<organism>
    <name type="scientific">Exiguobacterium sibiricum (strain DSM 17290 / CCUG 55495 / CIP 109462 / JCM 13490 / 255-15)</name>
    <dbReference type="NCBI Taxonomy" id="262543"/>
    <lineage>
        <taxon>Bacteria</taxon>
        <taxon>Bacillati</taxon>
        <taxon>Bacillota</taxon>
        <taxon>Bacilli</taxon>
        <taxon>Bacillales</taxon>
        <taxon>Bacillales Family XII. Incertae Sedis</taxon>
        <taxon>Exiguobacterium</taxon>
    </lineage>
</organism>
<comment type="function">
    <text evidence="1">Catalyzes the condensation of pantoate with beta-alanine in an ATP-dependent reaction via a pantoyl-adenylate intermediate.</text>
</comment>
<comment type="catalytic activity">
    <reaction evidence="1">
        <text>(R)-pantoate + beta-alanine + ATP = (R)-pantothenate + AMP + diphosphate + H(+)</text>
        <dbReference type="Rhea" id="RHEA:10912"/>
        <dbReference type="ChEBI" id="CHEBI:15378"/>
        <dbReference type="ChEBI" id="CHEBI:15980"/>
        <dbReference type="ChEBI" id="CHEBI:29032"/>
        <dbReference type="ChEBI" id="CHEBI:30616"/>
        <dbReference type="ChEBI" id="CHEBI:33019"/>
        <dbReference type="ChEBI" id="CHEBI:57966"/>
        <dbReference type="ChEBI" id="CHEBI:456215"/>
        <dbReference type="EC" id="6.3.2.1"/>
    </reaction>
</comment>
<comment type="pathway">
    <text evidence="1">Cofactor biosynthesis; (R)-pantothenate biosynthesis; (R)-pantothenate from (R)-pantoate and beta-alanine: step 1/1.</text>
</comment>
<comment type="subunit">
    <text evidence="1">Homodimer.</text>
</comment>
<comment type="subcellular location">
    <subcellularLocation>
        <location evidence="1">Cytoplasm</location>
    </subcellularLocation>
</comment>
<comment type="miscellaneous">
    <text evidence="1">The reaction proceeds by a bi uni uni bi ping pong mechanism.</text>
</comment>
<comment type="similarity">
    <text evidence="1">Belongs to the pantothenate synthetase family.</text>
</comment>
<accession>B1YHQ8</accession>
<protein>
    <recommendedName>
        <fullName evidence="1">Pantothenate synthetase</fullName>
        <shortName evidence="1">PS</shortName>
        <ecNumber evidence="1">6.3.2.1</ecNumber>
    </recommendedName>
    <alternativeName>
        <fullName evidence="1">Pantoate--beta-alanine ligase</fullName>
    </alternativeName>
    <alternativeName>
        <fullName evidence="1">Pantoate-activating enzyme</fullName>
    </alternativeName>
</protein>
<proteinExistence type="inferred from homology"/>
<sequence>MKIMQSVTQLREALAGQTSVGFIPTMGFLHEGHASLLEQARQENDIVVLSIFVNPTQFGPNEDLDRYPRDEQRDQQLAQAAGVDYLFYPTNDVMYPLDMARVTVRSGDDVLCGTSRPGHFDGVLTVVSKLFNIVQPTRAYFGLKDAQQLALIEGYVTDYFVPVEIKRCPIIREADGLAKSSRNVYLSETERKQAPGIQQALQQAKQALDAGTPLETVLEQTRASLHFEGTTIDYVEAVAYPTLGPVDATTDTILLAVAVQFESARLIDNLLYTRGA</sequence>
<keyword id="KW-0067">ATP-binding</keyword>
<keyword id="KW-0963">Cytoplasm</keyword>
<keyword id="KW-0436">Ligase</keyword>
<keyword id="KW-0547">Nucleotide-binding</keyword>
<keyword id="KW-0566">Pantothenate biosynthesis</keyword>
<keyword id="KW-1185">Reference proteome</keyword>
<dbReference type="EC" id="6.3.2.1" evidence="1"/>
<dbReference type="EMBL" id="CP001022">
    <property type="protein sequence ID" value="ACB61231.1"/>
    <property type="molecule type" value="Genomic_DNA"/>
</dbReference>
<dbReference type="RefSeq" id="WP_012370649.1">
    <property type="nucleotide sequence ID" value="NC_010556.1"/>
</dbReference>
<dbReference type="SMR" id="B1YHQ8"/>
<dbReference type="STRING" id="262543.Exig_1779"/>
<dbReference type="KEGG" id="esi:Exig_1779"/>
<dbReference type="eggNOG" id="COG0414">
    <property type="taxonomic scope" value="Bacteria"/>
</dbReference>
<dbReference type="HOGENOM" id="CLU_047148_0_0_9"/>
<dbReference type="OrthoDB" id="9773087at2"/>
<dbReference type="UniPathway" id="UPA00028">
    <property type="reaction ID" value="UER00005"/>
</dbReference>
<dbReference type="Proteomes" id="UP000001681">
    <property type="component" value="Chromosome"/>
</dbReference>
<dbReference type="GO" id="GO:0005829">
    <property type="term" value="C:cytosol"/>
    <property type="evidence" value="ECO:0007669"/>
    <property type="project" value="TreeGrafter"/>
</dbReference>
<dbReference type="GO" id="GO:0005524">
    <property type="term" value="F:ATP binding"/>
    <property type="evidence" value="ECO:0007669"/>
    <property type="project" value="UniProtKB-KW"/>
</dbReference>
<dbReference type="GO" id="GO:0004592">
    <property type="term" value="F:pantoate-beta-alanine ligase activity"/>
    <property type="evidence" value="ECO:0007669"/>
    <property type="project" value="UniProtKB-UniRule"/>
</dbReference>
<dbReference type="GO" id="GO:0015940">
    <property type="term" value="P:pantothenate biosynthetic process"/>
    <property type="evidence" value="ECO:0007669"/>
    <property type="project" value="UniProtKB-UniRule"/>
</dbReference>
<dbReference type="CDD" id="cd00560">
    <property type="entry name" value="PanC"/>
    <property type="match status" value="1"/>
</dbReference>
<dbReference type="FunFam" id="3.40.50.620:FF:000013">
    <property type="entry name" value="Pantothenate synthetase"/>
    <property type="match status" value="1"/>
</dbReference>
<dbReference type="Gene3D" id="3.40.50.620">
    <property type="entry name" value="HUPs"/>
    <property type="match status" value="1"/>
</dbReference>
<dbReference type="Gene3D" id="3.30.1300.10">
    <property type="entry name" value="Pantoate-beta-alanine ligase, C-terminal domain"/>
    <property type="match status" value="1"/>
</dbReference>
<dbReference type="HAMAP" id="MF_00158">
    <property type="entry name" value="PanC"/>
    <property type="match status" value="1"/>
</dbReference>
<dbReference type="InterPro" id="IPR004821">
    <property type="entry name" value="Cyt_trans-like"/>
</dbReference>
<dbReference type="InterPro" id="IPR003721">
    <property type="entry name" value="Pantoate_ligase"/>
</dbReference>
<dbReference type="InterPro" id="IPR042176">
    <property type="entry name" value="Pantoate_ligase_C"/>
</dbReference>
<dbReference type="InterPro" id="IPR014729">
    <property type="entry name" value="Rossmann-like_a/b/a_fold"/>
</dbReference>
<dbReference type="NCBIfam" id="TIGR00125">
    <property type="entry name" value="cyt_tran_rel"/>
    <property type="match status" value="1"/>
</dbReference>
<dbReference type="NCBIfam" id="TIGR00018">
    <property type="entry name" value="panC"/>
    <property type="match status" value="1"/>
</dbReference>
<dbReference type="PANTHER" id="PTHR21299">
    <property type="entry name" value="CYTIDYLATE KINASE/PANTOATE-BETA-ALANINE LIGASE"/>
    <property type="match status" value="1"/>
</dbReference>
<dbReference type="PANTHER" id="PTHR21299:SF1">
    <property type="entry name" value="PANTOATE--BETA-ALANINE LIGASE"/>
    <property type="match status" value="1"/>
</dbReference>
<dbReference type="Pfam" id="PF02569">
    <property type="entry name" value="Pantoate_ligase"/>
    <property type="match status" value="1"/>
</dbReference>
<dbReference type="SUPFAM" id="SSF52374">
    <property type="entry name" value="Nucleotidylyl transferase"/>
    <property type="match status" value="1"/>
</dbReference>
<gene>
    <name evidence="1" type="primary">panC</name>
    <name type="ordered locus">Exig_1779</name>
</gene>
<feature type="chain" id="PRO_1000118152" description="Pantothenate synthetase">
    <location>
        <begin position="1"/>
        <end position="276"/>
    </location>
</feature>
<feature type="active site" description="Proton donor" evidence="1">
    <location>
        <position position="33"/>
    </location>
</feature>
<feature type="binding site" evidence="1">
    <location>
        <begin position="26"/>
        <end position="33"/>
    </location>
    <ligand>
        <name>ATP</name>
        <dbReference type="ChEBI" id="CHEBI:30616"/>
    </ligand>
</feature>
<feature type="binding site" evidence="1">
    <location>
        <position position="57"/>
    </location>
    <ligand>
        <name>(R)-pantoate</name>
        <dbReference type="ChEBI" id="CHEBI:15980"/>
    </ligand>
</feature>
<feature type="binding site" evidence="1">
    <location>
        <position position="57"/>
    </location>
    <ligand>
        <name>beta-alanine</name>
        <dbReference type="ChEBI" id="CHEBI:57966"/>
    </ligand>
</feature>
<feature type="binding site" evidence="1">
    <location>
        <begin position="142"/>
        <end position="145"/>
    </location>
    <ligand>
        <name>ATP</name>
        <dbReference type="ChEBI" id="CHEBI:30616"/>
    </ligand>
</feature>
<feature type="binding site" evidence="1">
    <location>
        <position position="148"/>
    </location>
    <ligand>
        <name>(R)-pantoate</name>
        <dbReference type="ChEBI" id="CHEBI:15980"/>
    </ligand>
</feature>
<feature type="binding site" evidence="1">
    <location>
        <position position="171"/>
    </location>
    <ligand>
        <name>ATP</name>
        <dbReference type="ChEBI" id="CHEBI:30616"/>
    </ligand>
</feature>
<feature type="binding site" evidence="1">
    <location>
        <begin position="179"/>
        <end position="182"/>
    </location>
    <ligand>
        <name>ATP</name>
        <dbReference type="ChEBI" id="CHEBI:30616"/>
    </ligand>
</feature>
<name>PANC_EXIS2</name>